<organism>
    <name type="scientific">Prochlorococcus marinus (strain MIT 9313)</name>
    <dbReference type="NCBI Taxonomy" id="74547"/>
    <lineage>
        <taxon>Bacteria</taxon>
        <taxon>Bacillati</taxon>
        <taxon>Cyanobacteriota</taxon>
        <taxon>Cyanophyceae</taxon>
        <taxon>Synechococcales</taxon>
        <taxon>Prochlorococcaceae</taxon>
        <taxon>Prochlorococcus</taxon>
    </lineage>
</organism>
<feature type="chain" id="PRO_0000062864" description="Octanoyltransferase">
    <location>
        <begin position="1"/>
        <end position="243"/>
    </location>
</feature>
<feature type="domain" description="BPL/LPL catalytic" evidence="2">
    <location>
        <begin position="49"/>
        <end position="227"/>
    </location>
</feature>
<feature type="active site" description="Acyl-thioester intermediate" evidence="1">
    <location>
        <position position="189"/>
    </location>
</feature>
<feature type="binding site" evidence="1">
    <location>
        <begin position="91"/>
        <end position="98"/>
    </location>
    <ligand>
        <name>substrate</name>
    </ligand>
</feature>
<feature type="binding site" evidence="1">
    <location>
        <begin position="158"/>
        <end position="160"/>
    </location>
    <ligand>
        <name>substrate</name>
    </ligand>
</feature>
<feature type="binding site" evidence="1">
    <location>
        <begin position="171"/>
        <end position="173"/>
    </location>
    <ligand>
        <name>substrate</name>
    </ligand>
</feature>
<feature type="site" description="Lowers pKa of active site Cys" evidence="1">
    <location>
        <position position="155"/>
    </location>
</feature>
<proteinExistence type="inferred from homology"/>
<dbReference type="EC" id="2.3.1.181" evidence="1"/>
<dbReference type="EMBL" id="BX548175">
    <property type="protein sequence ID" value="CAE20389.1"/>
    <property type="molecule type" value="Genomic_DNA"/>
</dbReference>
<dbReference type="RefSeq" id="WP_011129593.1">
    <property type="nucleotide sequence ID" value="NC_005071.1"/>
</dbReference>
<dbReference type="SMR" id="Q7V8V9"/>
<dbReference type="KEGG" id="pmt:PMT_0214"/>
<dbReference type="eggNOG" id="COG0321">
    <property type="taxonomic scope" value="Bacteria"/>
</dbReference>
<dbReference type="HOGENOM" id="CLU_035168_1_0_3"/>
<dbReference type="OrthoDB" id="9787061at2"/>
<dbReference type="UniPathway" id="UPA00538">
    <property type="reaction ID" value="UER00592"/>
</dbReference>
<dbReference type="Proteomes" id="UP000001423">
    <property type="component" value="Chromosome"/>
</dbReference>
<dbReference type="GO" id="GO:0005737">
    <property type="term" value="C:cytoplasm"/>
    <property type="evidence" value="ECO:0007669"/>
    <property type="project" value="UniProtKB-SubCell"/>
</dbReference>
<dbReference type="GO" id="GO:0033819">
    <property type="term" value="F:lipoyl(octanoyl) transferase activity"/>
    <property type="evidence" value="ECO:0007669"/>
    <property type="project" value="UniProtKB-EC"/>
</dbReference>
<dbReference type="GO" id="GO:0036211">
    <property type="term" value="P:protein modification process"/>
    <property type="evidence" value="ECO:0007669"/>
    <property type="project" value="InterPro"/>
</dbReference>
<dbReference type="CDD" id="cd16444">
    <property type="entry name" value="LipB"/>
    <property type="match status" value="1"/>
</dbReference>
<dbReference type="Gene3D" id="3.30.930.10">
    <property type="entry name" value="Bira Bifunctional Protein, Domain 2"/>
    <property type="match status" value="1"/>
</dbReference>
<dbReference type="HAMAP" id="MF_00013">
    <property type="entry name" value="LipB"/>
    <property type="match status" value="1"/>
</dbReference>
<dbReference type="InterPro" id="IPR045864">
    <property type="entry name" value="aa-tRNA-synth_II/BPL/LPL"/>
</dbReference>
<dbReference type="InterPro" id="IPR004143">
    <property type="entry name" value="BPL_LPL_catalytic"/>
</dbReference>
<dbReference type="InterPro" id="IPR000544">
    <property type="entry name" value="Octanoyltransferase"/>
</dbReference>
<dbReference type="InterPro" id="IPR020605">
    <property type="entry name" value="Octanoyltransferase_CS"/>
</dbReference>
<dbReference type="NCBIfam" id="TIGR00214">
    <property type="entry name" value="lipB"/>
    <property type="match status" value="1"/>
</dbReference>
<dbReference type="PANTHER" id="PTHR10993:SF7">
    <property type="entry name" value="LIPOYLTRANSFERASE 2, MITOCHONDRIAL-RELATED"/>
    <property type="match status" value="1"/>
</dbReference>
<dbReference type="PANTHER" id="PTHR10993">
    <property type="entry name" value="OCTANOYLTRANSFERASE"/>
    <property type="match status" value="1"/>
</dbReference>
<dbReference type="Pfam" id="PF21948">
    <property type="entry name" value="LplA-B_cat"/>
    <property type="match status" value="1"/>
</dbReference>
<dbReference type="SUPFAM" id="SSF55681">
    <property type="entry name" value="Class II aaRS and biotin synthetases"/>
    <property type="match status" value="1"/>
</dbReference>
<dbReference type="PROSITE" id="PS51733">
    <property type="entry name" value="BPL_LPL_CATALYTIC"/>
    <property type="match status" value="1"/>
</dbReference>
<dbReference type="PROSITE" id="PS01313">
    <property type="entry name" value="LIPB"/>
    <property type="match status" value="1"/>
</dbReference>
<gene>
    <name evidence="1" type="primary">lipB</name>
    <name type="ordered locus">PMT_0214</name>
</gene>
<protein>
    <recommendedName>
        <fullName evidence="1">Octanoyltransferase</fullName>
        <ecNumber evidence="1">2.3.1.181</ecNumber>
    </recommendedName>
    <alternativeName>
        <fullName evidence="1">Lipoate-protein ligase B</fullName>
    </alternativeName>
    <alternativeName>
        <fullName evidence="1">Lipoyl/octanoyl transferase</fullName>
    </alternativeName>
    <alternativeName>
        <fullName evidence="1">Octanoyl-[acyl-carrier-protein]-protein N-octanoyltransferase</fullName>
    </alternativeName>
</protein>
<name>LIPB_PROMM</name>
<accession>Q7V8V9</accession>
<sequence>MPIDIGKLGTTSTSAQSQSTFLFECSEPVPFEMAWLWQQQWQQQLFANPLAPQAVWLLQHQACYTLGRGASEANLLFDVNNPPAALHRIDRGGEVTHHLPGQLVVYPVLDLRRYQTDLHWYLRQLEQVLIDVLAVLGLAGERLQGLTGLWLEGRKVAAIGVGCRRWITQHGLALNVDCDLESFSAVVPCGLVGHPVGRLNQWIPGLTMAEVQPLMRQSLSDRFGLVWQIPEPLAKPGAFASDA</sequence>
<keyword id="KW-0012">Acyltransferase</keyword>
<keyword id="KW-0963">Cytoplasm</keyword>
<keyword id="KW-1185">Reference proteome</keyword>
<keyword id="KW-0808">Transferase</keyword>
<comment type="function">
    <text evidence="1">Catalyzes the transfer of endogenously produced octanoic acid from octanoyl-acyl-carrier-protein onto the lipoyl domains of lipoate-dependent enzymes. Lipoyl-ACP can also act as a substrate although octanoyl-ACP is likely to be the physiological substrate.</text>
</comment>
<comment type="catalytic activity">
    <reaction evidence="1">
        <text>octanoyl-[ACP] + L-lysyl-[protein] = N(6)-octanoyl-L-lysyl-[protein] + holo-[ACP] + H(+)</text>
        <dbReference type="Rhea" id="RHEA:17665"/>
        <dbReference type="Rhea" id="RHEA-COMP:9636"/>
        <dbReference type="Rhea" id="RHEA-COMP:9685"/>
        <dbReference type="Rhea" id="RHEA-COMP:9752"/>
        <dbReference type="Rhea" id="RHEA-COMP:9928"/>
        <dbReference type="ChEBI" id="CHEBI:15378"/>
        <dbReference type="ChEBI" id="CHEBI:29969"/>
        <dbReference type="ChEBI" id="CHEBI:64479"/>
        <dbReference type="ChEBI" id="CHEBI:78463"/>
        <dbReference type="ChEBI" id="CHEBI:78809"/>
        <dbReference type="EC" id="2.3.1.181"/>
    </reaction>
</comment>
<comment type="pathway">
    <text evidence="1">Protein modification; protein lipoylation via endogenous pathway; protein N(6)-(lipoyl)lysine from octanoyl-[acyl-carrier-protein]: step 1/2.</text>
</comment>
<comment type="subcellular location">
    <subcellularLocation>
        <location evidence="1">Cytoplasm</location>
    </subcellularLocation>
</comment>
<comment type="miscellaneous">
    <text evidence="1">In the reaction, the free carboxyl group of octanoic acid is attached via an amide linkage to the epsilon-amino group of a specific lysine residue of lipoyl domains of lipoate-dependent enzymes.</text>
</comment>
<comment type="similarity">
    <text evidence="1">Belongs to the LipB family.</text>
</comment>
<reference key="1">
    <citation type="journal article" date="2003" name="Nature">
        <title>Genome divergence in two Prochlorococcus ecotypes reflects oceanic niche differentiation.</title>
        <authorList>
            <person name="Rocap G."/>
            <person name="Larimer F.W."/>
            <person name="Lamerdin J.E."/>
            <person name="Malfatti S."/>
            <person name="Chain P."/>
            <person name="Ahlgren N.A."/>
            <person name="Arellano A."/>
            <person name="Coleman M."/>
            <person name="Hauser L."/>
            <person name="Hess W.R."/>
            <person name="Johnson Z.I."/>
            <person name="Land M.L."/>
            <person name="Lindell D."/>
            <person name="Post A.F."/>
            <person name="Regala W."/>
            <person name="Shah M."/>
            <person name="Shaw S.L."/>
            <person name="Steglich C."/>
            <person name="Sullivan M.B."/>
            <person name="Ting C.S."/>
            <person name="Tolonen A."/>
            <person name="Webb E.A."/>
            <person name="Zinser E.R."/>
            <person name="Chisholm S.W."/>
        </authorList>
    </citation>
    <scope>NUCLEOTIDE SEQUENCE [LARGE SCALE GENOMIC DNA]</scope>
    <source>
        <strain>MIT 9313</strain>
    </source>
</reference>
<evidence type="ECO:0000255" key="1">
    <source>
        <dbReference type="HAMAP-Rule" id="MF_00013"/>
    </source>
</evidence>
<evidence type="ECO:0000255" key="2">
    <source>
        <dbReference type="PROSITE-ProRule" id="PRU01067"/>
    </source>
</evidence>